<sequence>MNTKRAYKLQEFVAHSAAVNCLKIGRKSSRVLVTGGEDHKVNLWAIGKPNAILSLYGHSSGIDSVTFDASEGLVAAGAASGTIKLWDLEEAKVVRTLTGHRSNCVSVNFHPFGEFFASGSLDTNLKIWDIRKKGCIHTYKGHTRGVNVLRFTPDGRWIVSGGEDNVVKVWDLTAGKLLHEFKSHEGKIQSLDFHPHEFLLATGSADKTVKFWDLETFELIGSGGTETTGVRCLTFNPDGKSVLCGLQESLKIFSWEPIRCHDGVDVGWSNLSDMNVHEGKLLGCSYNQNCVGVWVVDLSRTEPMSGGATQSNSHPEKTSGSGRDQAGLNDNSSKVILGKLPGSQKVDPLLKETKSLGKLSVSQNSDPLPKDTKSTGRSSVSQSSDPLVKEPKPLGRFSATHSSDTVKESRTLSSTGSVSDSPHRVTLTSAPKSASGISTVVPNAAASKRNFGKANPKANPPVVNKEDYFPVIVPRTEPIIEQASESRAELDIIGRTMPYSLQSKAADSRRLSSSRNEPDLPTSSLLERSQSQPIEPITLQDGNTYPSDEGGSWDTAERTNKESKCRVFGRFNSRSLVRSPPRNHDENSDLISYNANRDSSPTESRKGGRLHSLVLNRERRGRFSNFEGPVSSSSGGNMTAPNSRPSNMLKQRGNHVPVDQGITSASEEDIVADIMGQHDQFVSSMHSRLAKLQVVRRYWERNDIKNSISSIEKMADNAVIADVLLIVNERPEILTLDTCTSLLPLLTALLGSNMDSHLSVCLDLLLKLVRMYGSQIYSSLSAPSSVGVDIEAEQRMERYSCCFVEFEKIKACLPSLARRGNLVAKTLHELNLTFQEVSS</sequence>
<organism>
    <name type="scientific">Arabidopsis thaliana</name>
    <name type="common">Mouse-ear cress</name>
    <dbReference type="NCBI Taxonomy" id="3702"/>
    <lineage>
        <taxon>Eukaryota</taxon>
        <taxon>Viridiplantae</taxon>
        <taxon>Streptophyta</taxon>
        <taxon>Embryophyta</taxon>
        <taxon>Tracheophyta</taxon>
        <taxon>Spermatophyta</taxon>
        <taxon>Magnoliopsida</taxon>
        <taxon>eudicotyledons</taxon>
        <taxon>Gunneridae</taxon>
        <taxon>Pentapetalae</taxon>
        <taxon>rosids</taxon>
        <taxon>malvids</taxon>
        <taxon>Brassicales</taxon>
        <taxon>Brassicaceae</taxon>
        <taxon>Camelineae</taxon>
        <taxon>Arabidopsis</taxon>
    </lineage>
</organism>
<proteinExistence type="evidence at protein level"/>
<evidence type="ECO:0000255" key="1"/>
<evidence type="ECO:0000255" key="2">
    <source>
        <dbReference type="HAMAP-Rule" id="MF_03022"/>
    </source>
</evidence>
<evidence type="ECO:0000256" key="3">
    <source>
        <dbReference type="SAM" id="MobiDB-lite"/>
    </source>
</evidence>
<evidence type="ECO:0000269" key="4">
    <source>
    </source>
</evidence>
<evidence type="ECO:0000303" key="5">
    <source>
    </source>
</evidence>
<evidence type="ECO:0000305" key="6"/>
<evidence type="ECO:0000305" key="7">
    <source>
    </source>
</evidence>
<evidence type="ECO:0000312" key="8">
    <source>
        <dbReference type="Araport" id="AT5G08390"/>
    </source>
</evidence>
<evidence type="ECO:0000312" key="9">
    <source>
        <dbReference type="EMBL" id="CAC08339.1"/>
    </source>
</evidence>
<feature type="chain" id="PRO_0000450715" description="Katanin p80 WD40 repeat-containing subunit B1 homolog KTN80.3">
    <location>
        <begin position="1"/>
        <end position="839"/>
    </location>
</feature>
<feature type="repeat" description="WD 1" evidence="2">
    <location>
        <begin position="14"/>
        <end position="54"/>
    </location>
</feature>
<feature type="repeat" description="WD 2" evidence="2">
    <location>
        <begin position="57"/>
        <end position="96"/>
    </location>
</feature>
<feature type="repeat" description="WD 3" evidence="2">
    <location>
        <begin position="99"/>
        <end position="138"/>
    </location>
</feature>
<feature type="repeat" description="WD 4" evidence="2">
    <location>
        <begin position="141"/>
        <end position="182"/>
    </location>
</feature>
<feature type="repeat" description="WD 5" evidence="2">
    <location>
        <begin position="184"/>
        <end position="222"/>
    </location>
</feature>
<feature type="repeat" description="WD 6" evidence="2">
    <location>
        <begin position="225"/>
        <end position="265"/>
    </location>
</feature>
<feature type="repeat" description="WD 7" evidence="1">
    <location>
        <begin position="267"/>
        <end position="304"/>
    </location>
</feature>
<feature type="region of interest" description="Disordered" evidence="3">
    <location>
        <begin position="303"/>
        <end position="340"/>
    </location>
</feature>
<feature type="region of interest" description="Disordered" evidence="3">
    <location>
        <begin position="357"/>
        <end position="435"/>
    </location>
</feature>
<feature type="region of interest" description="Disordered" evidence="3">
    <location>
        <begin position="501"/>
        <end position="561"/>
    </location>
</feature>
<feature type="region of interest" description="Disordered" evidence="3">
    <location>
        <begin position="575"/>
        <end position="648"/>
    </location>
</feature>
<feature type="short sequence motif" description="DWD box" evidence="7">
    <location>
        <begin position="115"/>
        <end position="131"/>
    </location>
</feature>
<feature type="compositionally biased region" description="Polar residues" evidence="3">
    <location>
        <begin position="307"/>
        <end position="334"/>
    </location>
</feature>
<feature type="compositionally biased region" description="Polar residues" evidence="3">
    <location>
        <begin position="375"/>
        <end position="385"/>
    </location>
</feature>
<feature type="compositionally biased region" description="Polar residues" evidence="3">
    <location>
        <begin position="411"/>
        <end position="435"/>
    </location>
</feature>
<feature type="compositionally biased region" description="Polar residues" evidence="3">
    <location>
        <begin position="501"/>
        <end position="533"/>
    </location>
</feature>
<feature type="compositionally biased region" description="Polar residues" evidence="3">
    <location>
        <begin position="589"/>
        <end position="602"/>
    </location>
</feature>
<feature type="compositionally biased region" description="Polar residues" evidence="3">
    <location>
        <begin position="630"/>
        <end position="648"/>
    </location>
</feature>
<feature type="sequence conflict" description="In Ref. 3; BAE98997." evidence="6" ref="3">
    <original>R</original>
    <variation>L</variation>
    <location>
        <position position="688"/>
    </location>
</feature>
<accession>F4KB17</accession>
<accession>Q0WV51</accession>
<accession>Q9FT96</accession>
<gene>
    <name evidence="5" type="primary">KTN80.3</name>
    <name evidence="8" type="ordered locus">At5g08390</name>
    <name evidence="9" type="ORF">F8L15.120</name>
</gene>
<dbReference type="EMBL" id="AL392174">
    <property type="protein sequence ID" value="CAC08339.1"/>
    <property type="status" value="ALT_SEQ"/>
    <property type="molecule type" value="Genomic_DNA"/>
</dbReference>
<dbReference type="EMBL" id="CP002688">
    <property type="protein sequence ID" value="AED91294.1"/>
    <property type="molecule type" value="Genomic_DNA"/>
</dbReference>
<dbReference type="EMBL" id="AK226925">
    <property type="protein sequence ID" value="BAE98997.1"/>
    <property type="molecule type" value="mRNA"/>
</dbReference>
<dbReference type="RefSeq" id="NP_568194.2">
    <property type="nucleotide sequence ID" value="NM_120923.3"/>
</dbReference>
<dbReference type="SMR" id="F4KB17"/>
<dbReference type="FunCoup" id="F4KB17">
    <property type="interactions" value="1858"/>
</dbReference>
<dbReference type="STRING" id="3702.F4KB17"/>
<dbReference type="TCDB" id="8.A.92.1.12">
    <property type="family name" value="the g-protein AlphaBetaGama complex (gpc) family"/>
</dbReference>
<dbReference type="iPTMnet" id="F4KB17"/>
<dbReference type="PaxDb" id="3702-AT5G08390.1"/>
<dbReference type="ProteomicsDB" id="209819"/>
<dbReference type="EnsemblPlants" id="AT5G08390.1">
    <property type="protein sequence ID" value="AT5G08390.1"/>
    <property type="gene ID" value="AT5G08390"/>
</dbReference>
<dbReference type="GeneID" id="830737"/>
<dbReference type="Gramene" id="AT5G08390.1">
    <property type="protein sequence ID" value="AT5G08390.1"/>
    <property type="gene ID" value="AT5G08390"/>
</dbReference>
<dbReference type="KEGG" id="ath:AT5G08390"/>
<dbReference type="Araport" id="AT5G08390"/>
<dbReference type="TAIR" id="AT5G08390">
    <property type="gene designation" value="KTN80.3"/>
</dbReference>
<dbReference type="eggNOG" id="KOG0267">
    <property type="taxonomic scope" value="Eukaryota"/>
</dbReference>
<dbReference type="HOGENOM" id="CLU_007811_0_0_1"/>
<dbReference type="InParanoid" id="F4KB17"/>
<dbReference type="OMA" id="TYADIPN"/>
<dbReference type="OrthoDB" id="538223at2759"/>
<dbReference type="PRO" id="PR:F4KB17"/>
<dbReference type="Proteomes" id="UP000006548">
    <property type="component" value="Chromosome 5"/>
</dbReference>
<dbReference type="ExpressionAtlas" id="F4KB17">
    <property type="expression patterns" value="baseline and differential"/>
</dbReference>
<dbReference type="GO" id="GO:0080008">
    <property type="term" value="C:Cul4-RING E3 ubiquitin ligase complex"/>
    <property type="evidence" value="ECO:0000250"/>
    <property type="project" value="TAIR"/>
</dbReference>
<dbReference type="GO" id="GO:0005737">
    <property type="term" value="C:cytoplasm"/>
    <property type="evidence" value="ECO:0007669"/>
    <property type="project" value="UniProtKB-UniRule"/>
</dbReference>
<dbReference type="GO" id="GO:0008352">
    <property type="term" value="C:katanin complex"/>
    <property type="evidence" value="ECO:0007669"/>
    <property type="project" value="InterPro"/>
</dbReference>
<dbReference type="GO" id="GO:0005874">
    <property type="term" value="C:microtubule"/>
    <property type="evidence" value="ECO:0007669"/>
    <property type="project" value="UniProtKB-KW"/>
</dbReference>
<dbReference type="GO" id="GO:0015630">
    <property type="term" value="C:microtubule cytoskeleton"/>
    <property type="evidence" value="ECO:0000314"/>
    <property type="project" value="UniProtKB"/>
</dbReference>
<dbReference type="GO" id="GO:0008017">
    <property type="term" value="F:microtubule binding"/>
    <property type="evidence" value="ECO:0007669"/>
    <property type="project" value="UniProtKB-UniRule"/>
</dbReference>
<dbReference type="GO" id="GO:0051013">
    <property type="term" value="P:microtubule severing"/>
    <property type="evidence" value="ECO:0000315"/>
    <property type="project" value="UniProtKB"/>
</dbReference>
<dbReference type="GO" id="GO:0051510">
    <property type="term" value="P:regulation of unidimensional cell growth"/>
    <property type="evidence" value="ECO:0000315"/>
    <property type="project" value="UniProtKB"/>
</dbReference>
<dbReference type="CDD" id="cd00200">
    <property type="entry name" value="WD40"/>
    <property type="match status" value="1"/>
</dbReference>
<dbReference type="FunFam" id="2.130.10.10:FF:000192">
    <property type="entry name" value="Katanin p80 WD40 repeat-containing subunit B1 homolog"/>
    <property type="match status" value="1"/>
</dbReference>
<dbReference type="FunFam" id="2.130.10.10:FF:000626">
    <property type="entry name" value="Katanin p80 WD40 repeat-containing subunit B1 homolog"/>
    <property type="match status" value="1"/>
</dbReference>
<dbReference type="Gene3D" id="2.130.10.10">
    <property type="entry name" value="YVTN repeat-like/Quinoprotein amine dehydrogenase"/>
    <property type="match status" value="2"/>
</dbReference>
<dbReference type="HAMAP" id="MF_03022">
    <property type="entry name" value="Katanin_p80_B1"/>
    <property type="match status" value="1"/>
</dbReference>
<dbReference type="InterPro" id="IPR020472">
    <property type="entry name" value="G-protein_beta_WD-40_rep"/>
</dbReference>
<dbReference type="InterPro" id="IPR028021">
    <property type="entry name" value="Katanin_C-terminal"/>
</dbReference>
<dbReference type="InterPro" id="IPR026962">
    <property type="entry name" value="KTNB1"/>
</dbReference>
<dbReference type="InterPro" id="IPR015943">
    <property type="entry name" value="WD40/YVTN_repeat-like_dom_sf"/>
</dbReference>
<dbReference type="InterPro" id="IPR019775">
    <property type="entry name" value="WD40_repeat_CS"/>
</dbReference>
<dbReference type="InterPro" id="IPR036322">
    <property type="entry name" value="WD40_repeat_dom_sf"/>
</dbReference>
<dbReference type="InterPro" id="IPR001680">
    <property type="entry name" value="WD40_rpt"/>
</dbReference>
<dbReference type="PANTHER" id="PTHR19845">
    <property type="entry name" value="KATANIN P80 SUBUNIT"/>
    <property type="match status" value="1"/>
</dbReference>
<dbReference type="PANTHER" id="PTHR19845:SF21">
    <property type="entry name" value="KATANIN P80 WD40 REPEAT-CONTAINING SUBUNIT B1 HOMOLOG KTN80.3"/>
    <property type="match status" value="1"/>
</dbReference>
<dbReference type="Pfam" id="PF13925">
    <property type="entry name" value="Katanin_con80"/>
    <property type="match status" value="1"/>
</dbReference>
<dbReference type="Pfam" id="PF00400">
    <property type="entry name" value="WD40"/>
    <property type="match status" value="5"/>
</dbReference>
<dbReference type="PRINTS" id="PR00320">
    <property type="entry name" value="GPROTEINBRPT"/>
</dbReference>
<dbReference type="SMART" id="SM00320">
    <property type="entry name" value="WD40"/>
    <property type="match status" value="6"/>
</dbReference>
<dbReference type="SUPFAM" id="SSF50978">
    <property type="entry name" value="WD40 repeat-like"/>
    <property type="match status" value="1"/>
</dbReference>
<dbReference type="PROSITE" id="PS00678">
    <property type="entry name" value="WD_REPEATS_1"/>
    <property type="match status" value="2"/>
</dbReference>
<dbReference type="PROSITE" id="PS50082">
    <property type="entry name" value="WD_REPEATS_2"/>
    <property type="match status" value="5"/>
</dbReference>
<dbReference type="PROSITE" id="PS50294">
    <property type="entry name" value="WD_REPEATS_REGION"/>
    <property type="match status" value="1"/>
</dbReference>
<reference key="1">
    <citation type="journal article" date="2000" name="Nature">
        <title>Sequence and analysis of chromosome 5 of the plant Arabidopsis thaliana.</title>
        <authorList>
            <person name="Tabata S."/>
            <person name="Kaneko T."/>
            <person name="Nakamura Y."/>
            <person name="Kotani H."/>
            <person name="Kato T."/>
            <person name="Asamizu E."/>
            <person name="Miyajima N."/>
            <person name="Sasamoto S."/>
            <person name="Kimura T."/>
            <person name="Hosouchi T."/>
            <person name="Kawashima K."/>
            <person name="Kohara M."/>
            <person name="Matsumoto M."/>
            <person name="Matsuno A."/>
            <person name="Muraki A."/>
            <person name="Nakayama S."/>
            <person name="Nakazaki N."/>
            <person name="Naruo K."/>
            <person name="Okumura S."/>
            <person name="Shinpo S."/>
            <person name="Takeuchi C."/>
            <person name="Wada T."/>
            <person name="Watanabe A."/>
            <person name="Yamada M."/>
            <person name="Yasuda M."/>
            <person name="Sato S."/>
            <person name="de la Bastide M."/>
            <person name="Huang E."/>
            <person name="Spiegel L."/>
            <person name="Gnoj L."/>
            <person name="O'Shaughnessy A."/>
            <person name="Preston R."/>
            <person name="Habermann K."/>
            <person name="Murray J."/>
            <person name="Johnson D."/>
            <person name="Rohlfing T."/>
            <person name="Nelson J."/>
            <person name="Stoneking T."/>
            <person name="Pepin K."/>
            <person name="Spieth J."/>
            <person name="Sekhon M."/>
            <person name="Armstrong J."/>
            <person name="Becker M."/>
            <person name="Belter E."/>
            <person name="Cordum H."/>
            <person name="Cordes M."/>
            <person name="Courtney L."/>
            <person name="Courtney W."/>
            <person name="Dante M."/>
            <person name="Du H."/>
            <person name="Edwards J."/>
            <person name="Fryman J."/>
            <person name="Haakensen B."/>
            <person name="Lamar E."/>
            <person name="Latreille P."/>
            <person name="Leonard S."/>
            <person name="Meyer R."/>
            <person name="Mulvaney E."/>
            <person name="Ozersky P."/>
            <person name="Riley A."/>
            <person name="Strowmatt C."/>
            <person name="Wagner-McPherson C."/>
            <person name="Wollam A."/>
            <person name="Yoakum M."/>
            <person name="Bell M."/>
            <person name="Dedhia N."/>
            <person name="Parnell L."/>
            <person name="Shah R."/>
            <person name="Rodriguez M."/>
            <person name="Hoon See L."/>
            <person name="Vil D."/>
            <person name="Baker J."/>
            <person name="Kirchoff K."/>
            <person name="Toth K."/>
            <person name="King L."/>
            <person name="Bahret A."/>
            <person name="Miller B."/>
            <person name="Marra M.A."/>
            <person name="Martienssen R."/>
            <person name="McCombie W.R."/>
            <person name="Wilson R.K."/>
            <person name="Murphy G."/>
            <person name="Bancroft I."/>
            <person name="Volckaert G."/>
            <person name="Wambutt R."/>
            <person name="Duesterhoeft A."/>
            <person name="Stiekema W."/>
            <person name="Pohl T."/>
            <person name="Entian K.-D."/>
            <person name="Terryn N."/>
            <person name="Hartley N."/>
            <person name="Bent E."/>
            <person name="Johnson S."/>
            <person name="Langham S.-A."/>
            <person name="McCullagh B."/>
            <person name="Robben J."/>
            <person name="Grymonprez B."/>
            <person name="Zimmermann W."/>
            <person name="Ramsperger U."/>
            <person name="Wedler H."/>
            <person name="Balke K."/>
            <person name="Wedler E."/>
            <person name="Peters S."/>
            <person name="van Staveren M."/>
            <person name="Dirkse W."/>
            <person name="Mooijman P."/>
            <person name="Klein Lankhorst R."/>
            <person name="Weitzenegger T."/>
            <person name="Bothe G."/>
            <person name="Rose M."/>
            <person name="Hauf J."/>
            <person name="Berneiser S."/>
            <person name="Hempel S."/>
            <person name="Feldpausch M."/>
            <person name="Lamberth S."/>
            <person name="Villarroel R."/>
            <person name="Gielen J."/>
            <person name="Ardiles W."/>
            <person name="Bents O."/>
            <person name="Lemcke K."/>
            <person name="Kolesov G."/>
            <person name="Mayer K.F.X."/>
            <person name="Rudd S."/>
            <person name="Schoof H."/>
            <person name="Schueller C."/>
            <person name="Zaccaria P."/>
            <person name="Mewes H.-W."/>
            <person name="Bevan M."/>
            <person name="Fransz P.F."/>
        </authorList>
    </citation>
    <scope>NUCLEOTIDE SEQUENCE [LARGE SCALE GENOMIC DNA]</scope>
    <source>
        <strain>cv. Columbia</strain>
    </source>
</reference>
<reference key="2">
    <citation type="journal article" date="2017" name="Plant J.">
        <title>Araport11: a complete reannotation of the Arabidopsis thaliana reference genome.</title>
        <authorList>
            <person name="Cheng C.Y."/>
            <person name="Krishnakumar V."/>
            <person name="Chan A.P."/>
            <person name="Thibaud-Nissen F."/>
            <person name="Schobel S."/>
            <person name="Town C.D."/>
        </authorList>
    </citation>
    <scope>GENOME REANNOTATION</scope>
    <source>
        <strain>cv. Columbia</strain>
    </source>
</reference>
<reference key="3">
    <citation type="submission" date="2006-07" db="EMBL/GenBank/DDBJ databases">
        <title>Large-scale analysis of RIKEN Arabidopsis full-length (RAFL) cDNAs.</title>
        <authorList>
            <person name="Totoki Y."/>
            <person name="Seki M."/>
            <person name="Ishida J."/>
            <person name="Nakajima M."/>
            <person name="Enju A."/>
            <person name="Kamiya A."/>
            <person name="Narusaka M."/>
            <person name="Shin-i T."/>
            <person name="Nakagawa M."/>
            <person name="Sakamoto N."/>
            <person name="Oishi K."/>
            <person name="Kohara Y."/>
            <person name="Kobayashi M."/>
            <person name="Toyoda A."/>
            <person name="Sakaki Y."/>
            <person name="Sakurai T."/>
            <person name="Iida K."/>
            <person name="Akiyama K."/>
            <person name="Satou M."/>
            <person name="Toyoda T."/>
            <person name="Konagaya A."/>
            <person name="Carninci P."/>
            <person name="Kawai J."/>
            <person name="Hayashizaki Y."/>
            <person name="Shinozaki K."/>
        </authorList>
    </citation>
    <scope>NUCLEOTIDE SEQUENCE [LARGE SCALE MRNA]</scope>
    <source>
        <strain>cv. Columbia</strain>
    </source>
</reference>
<reference key="4">
    <citation type="journal article" date="2008" name="Plant Cell">
        <title>Characterization of Arabidopsis and rice DWD proteins and their roles as substrate receptors for CUL4-RING E3 ubiquitin ligases.</title>
        <authorList>
            <person name="Lee J.H."/>
            <person name="Terzaghi W."/>
            <person name="Gusmaroli G."/>
            <person name="Charron J.B."/>
            <person name="Yoon H.J."/>
            <person name="Chen H."/>
            <person name="He Y.J."/>
            <person name="Xiong Y."/>
            <person name="Deng X.W."/>
        </authorList>
    </citation>
    <scope>DWD MOTIF</scope>
</reference>
<reference key="5">
    <citation type="journal article" date="2008" name="Plant Cell">
        <title>Arabidopsis DDB1-CUL4 ASSOCIATED FACTOR1 forms a nuclear E3 ubiquitin ligase with DDB1 and CUL4 that is involved in multiple plant developmental processes.</title>
        <authorList>
            <person name="Zhang Y."/>
            <person name="Feng S."/>
            <person name="Chen F."/>
            <person name="Chen H."/>
            <person name="Wang J."/>
            <person name="McCall C."/>
            <person name="Xiong Y."/>
            <person name="Deng X.W."/>
        </authorList>
    </citation>
    <scope>GENE FAMILY</scope>
</reference>
<reference key="6">
    <citation type="journal article" date="2017" name="EMBO J.">
        <title>KTN80 confers precision to microtubule severing by specific targeting of katanin complexes in plant cells.</title>
        <authorList>
            <person name="Wang C."/>
            <person name="Liu W."/>
            <person name="Wang G."/>
            <person name="Li J."/>
            <person name="Dong L."/>
            <person name="Han L."/>
            <person name="Wang Q."/>
            <person name="Tian J."/>
            <person name="Yu Y."/>
            <person name="Gao C."/>
            <person name="Kong Z."/>
        </authorList>
    </citation>
    <scope>FUNCTION</scope>
    <scope>DISRUPTION PHENOTYPE</scope>
    <scope>SUBCELLULAR LOCATION</scope>
    <scope>TISSUE SPECIFICITY</scope>
    <scope>SUBUNIT</scope>
    <scope>INTERACTION WITH AAA1/KTN1; KTN80.1 AND KTN80.4</scope>
    <scope>GENE FAMILY</scope>
    <scope>NOMENCLATURE</scope>
    <source>
        <strain>cv. Columbia</strain>
    </source>
</reference>
<protein>
    <recommendedName>
        <fullName evidence="2 5">Katanin p80 WD40 repeat-containing subunit B1 homolog KTN80.3</fullName>
    </recommendedName>
</protein>
<comment type="function">
    <text evidence="2 4">May participate in a complex which severs microtubules in an ATP-dependent manner (By similarity). Microtubule severing may promote rapid reorganization of cellular microtubule arrays (By similarity). Confers precision to microtubule (MT) severing by specific targeting of KTN1 to MT cleavage sites such as crossover or branching nucleation sites (PubMed:28978669). Together with other KTN80s, regulates cell elongation by modulating MT organization (PubMed:28978669).</text>
</comment>
<comment type="subunit">
    <text evidence="4">Component of KTN80-KTN1 complexes composed of a hexamer of KTN1-KTN80 heterodimers that sense microtubule (MT) geometry to confer precise MT severing (PubMed:28978669). Interacts directly with AAA1/KTN1 and KTN80.1, and weakly with KTN80.4 (PubMed:28978669).</text>
</comment>
<comment type="subcellular location">
    <subcellularLocation>
        <location evidence="2 4">Cytoplasm</location>
        <location evidence="2 4">Cytoskeleton</location>
    </subcellularLocation>
    <text evidence="4">Present in dynamic discrete particles specifically localized to microtubule (MT) crossovers and branching nucleation sites.</text>
</comment>
<comment type="tissue specificity">
    <text evidence="4">Expressed in siliques, flowers, leaves, stems and roots.</text>
</comment>
<comment type="disruption phenotype">
    <text evidence="4">The double mutant ktn80.3 ktn80.4 exhibits normal growth, but the quadruple mutant ktn80.1 ktn80.2 ktn80.3 ktn80.4 has a severe dwarf phenotype, with small and round dark-green rosette leaves as well as wide and short petioles, probably due to cell elongation defects, and associated with a complex cortical microtubule (MT) network with stable entanglements (PubMed:28978669). Plants missing KTN80s have a disruption of KTN1 recruitment at MT crossover or branching nucleation sites, leading to an abolishment of MT severing (PubMed:28978669).</text>
</comment>
<comment type="similarity">
    <text evidence="2">Belongs to the WD repeat KATNB1 family.</text>
</comment>
<comment type="sequence caution" evidence="6">
    <conflict type="erroneous gene model prediction">
        <sequence resource="EMBL-CDS" id="CAC08339"/>
    </conflict>
</comment>
<keyword id="KW-0963">Cytoplasm</keyword>
<keyword id="KW-0206">Cytoskeleton</keyword>
<keyword id="KW-0493">Microtubule</keyword>
<keyword id="KW-1185">Reference proteome</keyword>
<keyword id="KW-0677">Repeat</keyword>
<keyword id="KW-0853">WD repeat</keyword>
<name>KTN83_ARATH</name>